<proteinExistence type="evidence at transcript level"/>
<reference key="1">
    <citation type="journal article" date="2000" name="Science">
        <title>The genome sequence of Drosophila melanogaster.</title>
        <authorList>
            <person name="Adams M.D."/>
            <person name="Celniker S.E."/>
            <person name="Holt R.A."/>
            <person name="Evans C.A."/>
            <person name="Gocayne J.D."/>
            <person name="Amanatides P.G."/>
            <person name="Scherer S.E."/>
            <person name="Li P.W."/>
            <person name="Hoskins R.A."/>
            <person name="Galle R.F."/>
            <person name="George R.A."/>
            <person name="Lewis S.E."/>
            <person name="Richards S."/>
            <person name="Ashburner M."/>
            <person name="Henderson S.N."/>
            <person name="Sutton G.G."/>
            <person name="Wortman J.R."/>
            <person name="Yandell M.D."/>
            <person name="Zhang Q."/>
            <person name="Chen L.X."/>
            <person name="Brandon R.C."/>
            <person name="Rogers Y.-H.C."/>
            <person name="Blazej R.G."/>
            <person name="Champe M."/>
            <person name="Pfeiffer B.D."/>
            <person name="Wan K.H."/>
            <person name="Doyle C."/>
            <person name="Baxter E.G."/>
            <person name="Helt G."/>
            <person name="Nelson C.R."/>
            <person name="Miklos G.L.G."/>
            <person name="Abril J.F."/>
            <person name="Agbayani A."/>
            <person name="An H.-J."/>
            <person name="Andrews-Pfannkoch C."/>
            <person name="Baldwin D."/>
            <person name="Ballew R.M."/>
            <person name="Basu A."/>
            <person name="Baxendale J."/>
            <person name="Bayraktaroglu L."/>
            <person name="Beasley E.M."/>
            <person name="Beeson K.Y."/>
            <person name="Benos P.V."/>
            <person name="Berman B.P."/>
            <person name="Bhandari D."/>
            <person name="Bolshakov S."/>
            <person name="Borkova D."/>
            <person name="Botchan M.R."/>
            <person name="Bouck J."/>
            <person name="Brokstein P."/>
            <person name="Brottier P."/>
            <person name="Burtis K.C."/>
            <person name="Busam D.A."/>
            <person name="Butler H."/>
            <person name="Cadieu E."/>
            <person name="Center A."/>
            <person name="Chandra I."/>
            <person name="Cherry J.M."/>
            <person name="Cawley S."/>
            <person name="Dahlke C."/>
            <person name="Davenport L.B."/>
            <person name="Davies P."/>
            <person name="de Pablos B."/>
            <person name="Delcher A."/>
            <person name="Deng Z."/>
            <person name="Mays A.D."/>
            <person name="Dew I."/>
            <person name="Dietz S.M."/>
            <person name="Dodson K."/>
            <person name="Doup L.E."/>
            <person name="Downes M."/>
            <person name="Dugan-Rocha S."/>
            <person name="Dunkov B.C."/>
            <person name="Dunn P."/>
            <person name="Durbin K.J."/>
            <person name="Evangelista C.C."/>
            <person name="Ferraz C."/>
            <person name="Ferriera S."/>
            <person name="Fleischmann W."/>
            <person name="Fosler C."/>
            <person name="Gabrielian A.E."/>
            <person name="Garg N.S."/>
            <person name="Gelbart W.M."/>
            <person name="Glasser K."/>
            <person name="Glodek A."/>
            <person name="Gong F."/>
            <person name="Gorrell J.H."/>
            <person name="Gu Z."/>
            <person name="Guan P."/>
            <person name="Harris M."/>
            <person name="Harris N.L."/>
            <person name="Harvey D.A."/>
            <person name="Heiman T.J."/>
            <person name="Hernandez J.R."/>
            <person name="Houck J."/>
            <person name="Hostin D."/>
            <person name="Houston K.A."/>
            <person name="Howland T.J."/>
            <person name="Wei M.-H."/>
            <person name="Ibegwam C."/>
            <person name="Jalali M."/>
            <person name="Kalush F."/>
            <person name="Karpen G.H."/>
            <person name="Ke Z."/>
            <person name="Kennison J.A."/>
            <person name="Ketchum K.A."/>
            <person name="Kimmel B.E."/>
            <person name="Kodira C.D."/>
            <person name="Kraft C.L."/>
            <person name="Kravitz S."/>
            <person name="Kulp D."/>
            <person name="Lai Z."/>
            <person name="Lasko P."/>
            <person name="Lei Y."/>
            <person name="Levitsky A.A."/>
            <person name="Li J.H."/>
            <person name="Li Z."/>
            <person name="Liang Y."/>
            <person name="Lin X."/>
            <person name="Liu X."/>
            <person name="Mattei B."/>
            <person name="McIntosh T.C."/>
            <person name="McLeod M.P."/>
            <person name="McPherson D."/>
            <person name="Merkulov G."/>
            <person name="Milshina N.V."/>
            <person name="Mobarry C."/>
            <person name="Morris J."/>
            <person name="Moshrefi A."/>
            <person name="Mount S.M."/>
            <person name="Moy M."/>
            <person name="Murphy B."/>
            <person name="Murphy L."/>
            <person name="Muzny D.M."/>
            <person name="Nelson D.L."/>
            <person name="Nelson D.R."/>
            <person name="Nelson K.A."/>
            <person name="Nixon K."/>
            <person name="Nusskern D.R."/>
            <person name="Pacleb J.M."/>
            <person name="Palazzolo M."/>
            <person name="Pittman G.S."/>
            <person name="Pan S."/>
            <person name="Pollard J."/>
            <person name="Puri V."/>
            <person name="Reese M.G."/>
            <person name="Reinert K."/>
            <person name="Remington K."/>
            <person name="Saunders R.D.C."/>
            <person name="Scheeler F."/>
            <person name="Shen H."/>
            <person name="Shue B.C."/>
            <person name="Siden-Kiamos I."/>
            <person name="Simpson M."/>
            <person name="Skupski M.P."/>
            <person name="Smith T.J."/>
            <person name="Spier E."/>
            <person name="Spradling A.C."/>
            <person name="Stapleton M."/>
            <person name="Strong R."/>
            <person name="Sun E."/>
            <person name="Svirskas R."/>
            <person name="Tector C."/>
            <person name="Turner R."/>
            <person name="Venter E."/>
            <person name="Wang A.H."/>
            <person name="Wang X."/>
            <person name="Wang Z.-Y."/>
            <person name="Wassarman D.A."/>
            <person name="Weinstock G.M."/>
            <person name="Weissenbach J."/>
            <person name="Williams S.M."/>
            <person name="Woodage T."/>
            <person name="Worley K.C."/>
            <person name="Wu D."/>
            <person name="Yang S."/>
            <person name="Yao Q.A."/>
            <person name="Ye J."/>
            <person name="Yeh R.-F."/>
            <person name="Zaveri J.S."/>
            <person name="Zhan M."/>
            <person name="Zhang G."/>
            <person name="Zhao Q."/>
            <person name="Zheng L."/>
            <person name="Zheng X.H."/>
            <person name="Zhong F.N."/>
            <person name="Zhong W."/>
            <person name="Zhou X."/>
            <person name="Zhu S.C."/>
            <person name="Zhu X."/>
            <person name="Smith H.O."/>
            <person name="Gibbs R.A."/>
            <person name="Myers E.W."/>
            <person name="Rubin G.M."/>
            <person name="Venter J.C."/>
        </authorList>
    </citation>
    <scope>NUCLEOTIDE SEQUENCE [LARGE SCALE GENOMIC DNA]</scope>
    <source>
        <strain>Berkeley</strain>
    </source>
</reference>
<reference key="2">
    <citation type="journal article" date="2002" name="Genome Biol.">
        <title>Annotation of the Drosophila melanogaster euchromatic genome: a systematic review.</title>
        <authorList>
            <person name="Misra S."/>
            <person name="Crosby M.A."/>
            <person name="Mungall C.J."/>
            <person name="Matthews B.B."/>
            <person name="Campbell K.S."/>
            <person name="Hradecky P."/>
            <person name="Huang Y."/>
            <person name="Kaminker J.S."/>
            <person name="Millburn G.H."/>
            <person name="Prochnik S.E."/>
            <person name="Smith C.D."/>
            <person name="Tupy J.L."/>
            <person name="Whitfield E.J."/>
            <person name="Bayraktaroglu L."/>
            <person name="Berman B.P."/>
            <person name="Bettencourt B.R."/>
            <person name="Celniker S.E."/>
            <person name="de Grey A.D.N.J."/>
            <person name="Drysdale R.A."/>
            <person name="Harris N.L."/>
            <person name="Richter J."/>
            <person name="Russo S."/>
            <person name="Schroeder A.J."/>
            <person name="Shu S.Q."/>
            <person name="Stapleton M."/>
            <person name="Yamada C."/>
            <person name="Ashburner M."/>
            <person name="Gelbart W.M."/>
            <person name="Rubin G.M."/>
            <person name="Lewis S.E."/>
        </authorList>
    </citation>
    <scope>GENOME REANNOTATION</scope>
    <source>
        <strain>Berkeley</strain>
    </source>
</reference>
<reference key="3">
    <citation type="journal article" date="2000" name="Science">
        <title>From sequence to chromosome: the tip of the X chromosome of D. melanogaster.</title>
        <authorList>
            <person name="Benos P.V."/>
            <person name="Gatt M.K."/>
            <person name="Ashburner M."/>
            <person name="Murphy L."/>
            <person name="Harris D."/>
            <person name="Barrell B.G."/>
            <person name="Ferraz C."/>
            <person name="Vidal S."/>
            <person name="Brun C."/>
            <person name="Demailles J."/>
            <person name="Cadieu E."/>
            <person name="Dreano S."/>
            <person name="Gloux S."/>
            <person name="Lelaure V."/>
            <person name="Mottier S."/>
            <person name="Galibert F."/>
            <person name="Borkova D."/>
            <person name="Minana B."/>
            <person name="Kafatos F.C."/>
            <person name="Louis C."/>
            <person name="Siden-Kiamos I."/>
            <person name="Bolshakov S."/>
            <person name="Papagiannakis G."/>
            <person name="Spanos L."/>
            <person name="Cox S."/>
            <person name="Madueno E."/>
            <person name="de Pablos B."/>
            <person name="Modolell J."/>
            <person name="Peter A."/>
            <person name="Schoettler P."/>
            <person name="Werner M."/>
            <person name="Mourkioti F."/>
            <person name="Beinert N."/>
            <person name="Dowe G."/>
            <person name="Schaefer U."/>
            <person name="Jaeckle H."/>
            <person name="Bucheton A."/>
            <person name="Callister D.M."/>
            <person name="Campbell L.A."/>
            <person name="Darlamitsou A."/>
            <person name="Henderson N.S."/>
            <person name="McMillan P.J."/>
            <person name="Salles C."/>
            <person name="Tait E.A."/>
            <person name="Valenti P."/>
            <person name="Saunders R.D.C."/>
            <person name="Glover D.M."/>
        </authorList>
    </citation>
    <scope>NUCLEOTIDE SEQUENCE [LARGE SCALE GENOMIC DNA]</scope>
    <source>
        <strain>Oregon-R</strain>
    </source>
</reference>
<reference key="4">
    <citation type="submission" date="2007-12" db="EMBL/GenBank/DDBJ databases">
        <authorList>
            <person name="Stapleton M."/>
            <person name="Carlson J.W."/>
            <person name="Frise E."/>
            <person name="Kapadia B."/>
            <person name="Park S."/>
            <person name="Wan K.H."/>
            <person name="Yu C."/>
            <person name="Celniker S.E."/>
        </authorList>
    </citation>
    <scope>NUCLEOTIDE SEQUENCE [LARGE SCALE MRNA]</scope>
    <source>
        <strain>Berkeley</strain>
        <tissue>Head</tissue>
    </source>
</reference>
<reference key="5">
    <citation type="journal article" date="2002" name="Genome Biol.">
        <title>A Drosophila full-length cDNA resource.</title>
        <authorList>
            <person name="Stapleton M."/>
            <person name="Carlson J.W."/>
            <person name="Brokstein P."/>
            <person name="Yu C."/>
            <person name="Champe M."/>
            <person name="George R.A."/>
            <person name="Guarin H."/>
            <person name="Kronmiller B."/>
            <person name="Pacleb J.M."/>
            <person name="Park S."/>
            <person name="Wan K.H."/>
            <person name="Rubin G.M."/>
            <person name="Celniker S.E."/>
        </authorList>
    </citation>
    <scope>NUCLEOTIDE SEQUENCE [LARGE SCALE MRNA] OF 230-556</scope>
    <source>
        <strain>Berkeley</strain>
        <tissue>Head</tissue>
    </source>
</reference>
<reference key="6">
    <citation type="journal article" date="1996" name="Mol. Gen. Genet.">
        <title>Cytochrome P450 gene clusters in Drosophila melanogaster.</title>
        <authorList>
            <person name="Dunkov B.C."/>
            <person name="Rodriguez-Arnaiz R."/>
            <person name="Pittendrigh B."/>
            <person name="ffrench-Constant R.H."/>
            <person name="Feyereisen R."/>
        </authorList>
    </citation>
    <scope>NUCLEOTIDE SEQUENCE [MRNA] OF 361-488</scope>
    <source>
        <strain>Haag-79</strain>
    </source>
</reference>
<feature type="chain" id="PRO_0000051843" description="Cytochrome P450 4g1">
    <location>
        <begin position="1"/>
        <end position="556"/>
    </location>
</feature>
<feature type="binding site" description="covalent" evidence="1">
    <location>
        <position position="356"/>
    </location>
    <ligand>
        <name>heme</name>
        <dbReference type="ChEBI" id="CHEBI:30413"/>
    </ligand>
</feature>
<feature type="binding site" description="axial binding residue" evidence="1">
    <location>
        <position position="497"/>
    </location>
    <ligand>
        <name>heme</name>
        <dbReference type="ChEBI" id="CHEBI:30413"/>
    </ligand>
    <ligandPart>
        <name>Fe</name>
        <dbReference type="ChEBI" id="CHEBI:18248"/>
    </ligandPart>
</feature>
<name>CP4G1_DROME</name>
<accession>Q9V3S0</accession>
<accession>A9UN25</accession>
<accession>Q24126</accession>
<accession>Q95U60</accession>
<dbReference type="EC" id="1.14.-.-"/>
<dbReference type="EMBL" id="AE014298">
    <property type="protein sequence ID" value="AAF45503.1"/>
    <property type="molecule type" value="Genomic_DNA"/>
</dbReference>
<dbReference type="EMBL" id="AL009188">
    <property type="protein sequence ID" value="CAA15672.1"/>
    <property type="molecule type" value="Genomic_DNA"/>
</dbReference>
<dbReference type="EMBL" id="BT031189">
    <property type="protein sequence ID" value="ABY20430.1"/>
    <property type="molecule type" value="mRNA"/>
</dbReference>
<dbReference type="EMBL" id="AY058294">
    <property type="protein sequence ID" value="AAL13523.1"/>
    <property type="molecule type" value="mRNA"/>
</dbReference>
<dbReference type="EMBL" id="U34328">
    <property type="protein sequence ID" value="AAA80662.1"/>
    <property type="molecule type" value="mRNA"/>
</dbReference>
<dbReference type="PIR" id="S70623">
    <property type="entry name" value="S70623"/>
</dbReference>
<dbReference type="RefSeq" id="NP_525031.1">
    <property type="nucleotide sequence ID" value="NM_080292.4"/>
</dbReference>
<dbReference type="SMR" id="Q9V3S0"/>
<dbReference type="BioGRID" id="57559">
    <property type="interactions" value="5"/>
</dbReference>
<dbReference type="DIP" id="DIP-17629N"/>
<dbReference type="FunCoup" id="Q9V3S0">
    <property type="interactions" value="15"/>
</dbReference>
<dbReference type="IntAct" id="Q9V3S0">
    <property type="interactions" value="17"/>
</dbReference>
<dbReference type="STRING" id="7227.FBpp0070094"/>
<dbReference type="GlyGen" id="Q9V3S0">
    <property type="glycosylation" value="1 site"/>
</dbReference>
<dbReference type="PaxDb" id="7227-FBpp0070094"/>
<dbReference type="EnsemblMetazoa" id="FBtr0070099">
    <property type="protein sequence ID" value="FBpp0070094"/>
    <property type="gene ID" value="FBgn0010019"/>
</dbReference>
<dbReference type="GeneID" id="30986"/>
<dbReference type="KEGG" id="dme:Dmel_CG3972"/>
<dbReference type="AGR" id="FB:FBgn0010019"/>
<dbReference type="CTD" id="30986"/>
<dbReference type="FlyBase" id="FBgn0010019">
    <property type="gene designation" value="Cyp4g1"/>
</dbReference>
<dbReference type="VEuPathDB" id="VectorBase:FBgn0010019"/>
<dbReference type="eggNOG" id="KOG0157">
    <property type="taxonomic scope" value="Eukaryota"/>
</dbReference>
<dbReference type="HOGENOM" id="CLU_001570_5_1_1"/>
<dbReference type="InParanoid" id="Q9V3S0"/>
<dbReference type="OMA" id="WRRNSRE"/>
<dbReference type="OrthoDB" id="1470350at2759"/>
<dbReference type="PhylomeDB" id="Q9V3S0"/>
<dbReference type="Reactome" id="R-DME-193144">
    <property type="pathway name" value="Estrogen biosynthesis"/>
</dbReference>
<dbReference type="Reactome" id="R-DME-211976">
    <property type="pathway name" value="Endogenous sterols"/>
</dbReference>
<dbReference type="BioGRID-ORCS" id="30986">
    <property type="hits" value="0 hits in 1 CRISPR screen"/>
</dbReference>
<dbReference type="GenomeRNAi" id="30986"/>
<dbReference type="PRO" id="PR:Q9V3S0"/>
<dbReference type="Proteomes" id="UP000000803">
    <property type="component" value="Chromosome X"/>
</dbReference>
<dbReference type="Bgee" id="FBgn0010019">
    <property type="expression patterns" value="Expressed in adult enterocyte in adult thorax and 94 other cell types or tissues"/>
</dbReference>
<dbReference type="GO" id="GO:0005789">
    <property type="term" value="C:endoplasmic reticulum membrane"/>
    <property type="evidence" value="ECO:0007669"/>
    <property type="project" value="UniProtKB-SubCell"/>
</dbReference>
<dbReference type="GO" id="GO:0020037">
    <property type="term" value="F:heme binding"/>
    <property type="evidence" value="ECO:0007669"/>
    <property type="project" value="InterPro"/>
</dbReference>
<dbReference type="GO" id="GO:0005506">
    <property type="term" value="F:iron ion binding"/>
    <property type="evidence" value="ECO:0007669"/>
    <property type="project" value="InterPro"/>
</dbReference>
<dbReference type="GO" id="GO:0160238">
    <property type="term" value="F:long-chain fatty aldehyde oxidative decarbonylase activity"/>
    <property type="evidence" value="ECO:0000315"/>
    <property type="project" value="FlyBase"/>
</dbReference>
<dbReference type="GO" id="GO:0004497">
    <property type="term" value="F:monooxygenase activity"/>
    <property type="evidence" value="ECO:0007669"/>
    <property type="project" value="UniProtKB-KW"/>
</dbReference>
<dbReference type="GO" id="GO:0016705">
    <property type="term" value="F:oxidoreductase activity, acting on paired donors, with incorporation or reduction of molecular oxygen"/>
    <property type="evidence" value="ECO:0007669"/>
    <property type="project" value="InterPro"/>
</dbReference>
<dbReference type="GO" id="GO:0006723">
    <property type="term" value="P:cuticle hydrocarbon biosynthetic process"/>
    <property type="evidence" value="ECO:0000315"/>
    <property type="project" value="FlyBase"/>
</dbReference>
<dbReference type="CDD" id="cd20628">
    <property type="entry name" value="CYP4"/>
    <property type="match status" value="1"/>
</dbReference>
<dbReference type="FunFam" id="1.10.630.10:FF:000035">
    <property type="entry name" value="CYtochrome P450 family"/>
    <property type="match status" value="1"/>
</dbReference>
<dbReference type="Gene3D" id="1.10.630.10">
    <property type="entry name" value="Cytochrome P450"/>
    <property type="match status" value="1"/>
</dbReference>
<dbReference type="InterPro" id="IPR001128">
    <property type="entry name" value="Cyt_P450"/>
</dbReference>
<dbReference type="InterPro" id="IPR017972">
    <property type="entry name" value="Cyt_P450_CS"/>
</dbReference>
<dbReference type="InterPro" id="IPR002401">
    <property type="entry name" value="Cyt_P450_E_grp-I"/>
</dbReference>
<dbReference type="InterPro" id="IPR036396">
    <property type="entry name" value="Cyt_P450_sf"/>
</dbReference>
<dbReference type="InterPro" id="IPR050196">
    <property type="entry name" value="Cytochrome_P450_Monoox"/>
</dbReference>
<dbReference type="PANTHER" id="PTHR24291:SF106">
    <property type="entry name" value="CYTOCHROME P450 4G1-RELATED"/>
    <property type="match status" value="1"/>
</dbReference>
<dbReference type="PANTHER" id="PTHR24291">
    <property type="entry name" value="CYTOCHROME P450 FAMILY 4"/>
    <property type="match status" value="1"/>
</dbReference>
<dbReference type="Pfam" id="PF00067">
    <property type="entry name" value="p450"/>
    <property type="match status" value="1"/>
</dbReference>
<dbReference type="PRINTS" id="PR00463">
    <property type="entry name" value="EP450I"/>
</dbReference>
<dbReference type="PRINTS" id="PR00385">
    <property type="entry name" value="P450"/>
</dbReference>
<dbReference type="SUPFAM" id="SSF48264">
    <property type="entry name" value="Cytochrome P450"/>
    <property type="match status" value="1"/>
</dbReference>
<dbReference type="PROSITE" id="PS00086">
    <property type="entry name" value="CYTOCHROME_P450"/>
    <property type="match status" value="1"/>
</dbReference>
<evidence type="ECO:0000250" key="1"/>
<evidence type="ECO:0000305" key="2"/>
<gene>
    <name type="primary">Cyp4g1</name>
    <name type="ORF">CG3972</name>
</gene>
<comment type="function">
    <text evidence="1">May be involved in the metabolism of insect hormones and in the breakdown of synthetic insecticides.</text>
</comment>
<comment type="cofactor">
    <cofactor evidence="1">
        <name>heme</name>
        <dbReference type="ChEBI" id="CHEBI:30413"/>
    </cofactor>
</comment>
<comment type="subcellular location">
    <subcellularLocation>
        <location evidence="2">Endoplasmic reticulum membrane</location>
        <topology evidence="2">Peripheral membrane protein</topology>
    </subcellularLocation>
    <subcellularLocation>
        <location evidence="2">Microsome membrane</location>
        <topology evidence="2">Peripheral membrane protein</topology>
    </subcellularLocation>
</comment>
<comment type="similarity">
    <text evidence="2">Belongs to the cytochrome P450 family.</text>
</comment>
<sequence length="556" mass="62971">MAVEVVQETLQQAASSSSTTVLGFSPMLTTLVGTLVAMALYEYWRRNSREYRMVANIPSPPELPILGQAHVAAGLSNAEILAVGLGYLNKYGETMKAWLGNVLLVFLTNPSDIELILSGHQHLTKAEEYRYFKPWFGDGLLISNGHHWRHHRKMIAPTFHQSILKSFVPTFVDHSKAVVARMGLEAGKSFDVHDYMSQTTVDILLSTAMGVKKLPEGNKSFEYAQAVVDMCDIIHKRQVKLLYRLDSIYKFTKLREKGDRMMNIILGMTSKVVKDRKENFQEESRAIVEEISTPVASTPASKKEGLRDDLDDIDENDVGAKRRLALLDAMVEMAKNPDIEWNEKDIMDEVNTIMFEGHDTTSAGSSFALCMMGIHKDIQAKVFAEQKAIFGDNMLRDCTFADTMEMKYLERVILETLRLYPPVPLIARRLDYDLKLASGPYTVPKGTTVIVLQYCVHRRPDIYPNPTKFDPDNFLPERMANRHYYSFIPFSAGPRSCVGRKYAMLKLKVLLSTIVRNYIVHSTDTEADFKLQADIILKLENGFNVSLEKRQYATVA</sequence>
<keyword id="KW-0256">Endoplasmic reticulum</keyword>
<keyword id="KW-0349">Heme</keyword>
<keyword id="KW-0408">Iron</keyword>
<keyword id="KW-0472">Membrane</keyword>
<keyword id="KW-0479">Metal-binding</keyword>
<keyword id="KW-0492">Microsome</keyword>
<keyword id="KW-0503">Monooxygenase</keyword>
<keyword id="KW-0560">Oxidoreductase</keyword>
<keyword id="KW-1185">Reference proteome</keyword>
<organism>
    <name type="scientific">Drosophila melanogaster</name>
    <name type="common">Fruit fly</name>
    <dbReference type="NCBI Taxonomy" id="7227"/>
    <lineage>
        <taxon>Eukaryota</taxon>
        <taxon>Metazoa</taxon>
        <taxon>Ecdysozoa</taxon>
        <taxon>Arthropoda</taxon>
        <taxon>Hexapoda</taxon>
        <taxon>Insecta</taxon>
        <taxon>Pterygota</taxon>
        <taxon>Neoptera</taxon>
        <taxon>Endopterygota</taxon>
        <taxon>Diptera</taxon>
        <taxon>Brachycera</taxon>
        <taxon>Muscomorpha</taxon>
        <taxon>Ephydroidea</taxon>
        <taxon>Drosophilidae</taxon>
        <taxon>Drosophila</taxon>
        <taxon>Sophophora</taxon>
    </lineage>
</organism>
<protein>
    <recommendedName>
        <fullName>Cytochrome P450 4g1</fullName>
        <ecNumber>1.14.-.-</ecNumber>
    </recommendedName>
    <alternativeName>
        <fullName>CYPIVG1</fullName>
    </alternativeName>
</protein>